<comment type="function">
    <text evidence="1">Required for rescue of stalled ribosomes mediated by trans-translation. Binds to transfer-messenger RNA (tmRNA), required for stable association of tmRNA with ribosomes. tmRNA and SmpB together mimic tRNA shape, replacing the anticodon stem-loop with SmpB. tmRNA is encoded by the ssrA gene; the 2 termini fold to resemble tRNA(Ala) and it encodes a 'tag peptide', a short internal open reading frame. During trans-translation Ala-aminoacylated tmRNA acts like a tRNA, entering the A-site of stalled ribosomes, displacing the stalled mRNA. The ribosome then switches to translate the ORF on the tmRNA; the nascent peptide is terminated with the 'tag peptide' encoded by the tmRNA and targeted for degradation. The ribosome is freed to recommence translation, which seems to be the essential function of trans-translation.</text>
</comment>
<comment type="subcellular location">
    <subcellularLocation>
        <location evidence="1">Cytoplasm</location>
    </subcellularLocation>
    <text evidence="1">The tmRNA-SmpB complex associates with stalled 70S ribosomes.</text>
</comment>
<comment type="similarity">
    <text evidence="1">Belongs to the SmpB family.</text>
</comment>
<gene>
    <name evidence="1" type="primary">smpB</name>
    <name type="ordered locus">XCC1466</name>
</gene>
<dbReference type="EMBL" id="AE008922">
    <property type="protein sequence ID" value="AAM40762.1"/>
    <property type="molecule type" value="Genomic_DNA"/>
</dbReference>
<dbReference type="RefSeq" id="NP_636838.1">
    <property type="nucleotide sequence ID" value="NC_003902.1"/>
</dbReference>
<dbReference type="RefSeq" id="WP_011036652.1">
    <property type="nucleotide sequence ID" value="NC_003902.1"/>
</dbReference>
<dbReference type="SMR" id="Q8PAL7"/>
<dbReference type="STRING" id="190485.XCC1466"/>
<dbReference type="EnsemblBacteria" id="AAM40762">
    <property type="protein sequence ID" value="AAM40762"/>
    <property type="gene ID" value="XCC1466"/>
</dbReference>
<dbReference type="GeneID" id="58013949"/>
<dbReference type="KEGG" id="xcc:XCC1466"/>
<dbReference type="PATRIC" id="fig|190485.4.peg.1570"/>
<dbReference type="eggNOG" id="COG0691">
    <property type="taxonomic scope" value="Bacteria"/>
</dbReference>
<dbReference type="HOGENOM" id="CLU_108953_3_0_6"/>
<dbReference type="OrthoDB" id="9805462at2"/>
<dbReference type="Proteomes" id="UP000001010">
    <property type="component" value="Chromosome"/>
</dbReference>
<dbReference type="GO" id="GO:0005829">
    <property type="term" value="C:cytosol"/>
    <property type="evidence" value="ECO:0000318"/>
    <property type="project" value="GO_Central"/>
</dbReference>
<dbReference type="GO" id="GO:0003723">
    <property type="term" value="F:RNA binding"/>
    <property type="evidence" value="ECO:0000318"/>
    <property type="project" value="GO_Central"/>
</dbReference>
<dbReference type="GO" id="GO:0070929">
    <property type="term" value="P:trans-translation"/>
    <property type="evidence" value="ECO:0007669"/>
    <property type="project" value="UniProtKB-UniRule"/>
</dbReference>
<dbReference type="CDD" id="cd09294">
    <property type="entry name" value="SmpB"/>
    <property type="match status" value="1"/>
</dbReference>
<dbReference type="Gene3D" id="2.40.280.10">
    <property type="match status" value="1"/>
</dbReference>
<dbReference type="HAMAP" id="MF_00023">
    <property type="entry name" value="SmpB"/>
    <property type="match status" value="1"/>
</dbReference>
<dbReference type="InterPro" id="IPR023620">
    <property type="entry name" value="SmpB"/>
</dbReference>
<dbReference type="InterPro" id="IPR000037">
    <property type="entry name" value="SsrA-bd_prot"/>
</dbReference>
<dbReference type="InterPro" id="IPR020081">
    <property type="entry name" value="SsrA-bd_prot_CS"/>
</dbReference>
<dbReference type="NCBIfam" id="NF003843">
    <property type="entry name" value="PRK05422.1"/>
    <property type="match status" value="1"/>
</dbReference>
<dbReference type="NCBIfam" id="TIGR00086">
    <property type="entry name" value="smpB"/>
    <property type="match status" value="1"/>
</dbReference>
<dbReference type="PANTHER" id="PTHR30308:SF2">
    <property type="entry name" value="SSRA-BINDING PROTEIN"/>
    <property type="match status" value="1"/>
</dbReference>
<dbReference type="PANTHER" id="PTHR30308">
    <property type="entry name" value="TMRNA-BINDING COMPONENT OF TRANS-TRANSLATION TAGGING COMPLEX"/>
    <property type="match status" value="1"/>
</dbReference>
<dbReference type="Pfam" id="PF01668">
    <property type="entry name" value="SmpB"/>
    <property type="match status" value="1"/>
</dbReference>
<dbReference type="SUPFAM" id="SSF74982">
    <property type="entry name" value="Small protein B (SmpB)"/>
    <property type="match status" value="1"/>
</dbReference>
<dbReference type="PROSITE" id="PS01317">
    <property type="entry name" value="SSRP"/>
    <property type="match status" value="1"/>
</dbReference>
<accession>Q8PAL7</accession>
<sequence length="167" mass="19224">MSKKPAKDKAKSATATKTIALNKRARHEYHLEERYEAGLALQGWEVKAIRAGRANIVDGYAYVRSGEIYLIGAQITPLIQASTHVIPVERRDRKLLLHRAEIDKVLTRVEREGYTLVPTALYWSSNKVKLEIALAKGKQSHDKRDAAKERDWQRDKQRVMRRHNRDA</sequence>
<feature type="chain" id="PRO_0000103072" description="SsrA-binding protein">
    <location>
        <begin position="1"/>
        <end position="167"/>
    </location>
</feature>
<feature type="region of interest" description="Disordered" evidence="2">
    <location>
        <begin position="137"/>
        <end position="167"/>
    </location>
</feature>
<feature type="compositionally biased region" description="Basic and acidic residues" evidence="2">
    <location>
        <begin position="139"/>
        <end position="158"/>
    </location>
</feature>
<proteinExistence type="inferred from homology"/>
<reference key="1">
    <citation type="journal article" date="2002" name="Nature">
        <title>Comparison of the genomes of two Xanthomonas pathogens with differing host specificities.</title>
        <authorList>
            <person name="da Silva A.C.R."/>
            <person name="Ferro J.A."/>
            <person name="Reinach F.C."/>
            <person name="Farah C.S."/>
            <person name="Furlan L.R."/>
            <person name="Quaggio R.B."/>
            <person name="Monteiro-Vitorello C.B."/>
            <person name="Van Sluys M.A."/>
            <person name="Almeida N.F. Jr."/>
            <person name="Alves L.M.C."/>
            <person name="do Amaral A.M."/>
            <person name="Bertolini M.C."/>
            <person name="Camargo L.E.A."/>
            <person name="Camarotte G."/>
            <person name="Cannavan F."/>
            <person name="Cardozo J."/>
            <person name="Chambergo F."/>
            <person name="Ciapina L.P."/>
            <person name="Cicarelli R.M.B."/>
            <person name="Coutinho L.L."/>
            <person name="Cursino-Santos J.R."/>
            <person name="El-Dorry H."/>
            <person name="Faria J.B."/>
            <person name="Ferreira A.J.S."/>
            <person name="Ferreira R.C.C."/>
            <person name="Ferro M.I.T."/>
            <person name="Formighieri E.F."/>
            <person name="Franco M.C."/>
            <person name="Greggio C.C."/>
            <person name="Gruber A."/>
            <person name="Katsuyama A.M."/>
            <person name="Kishi L.T."/>
            <person name="Leite R.P."/>
            <person name="Lemos E.G.M."/>
            <person name="Lemos M.V.F."/>
            <person name="Locali E.C."/>
            <person name="Machado M.A."/>
            <person name="Madeira A.M.B.N."/>
            <person name="Martinez-Rossi N.M."/>
            <person name="Martins E.C."/>
            <person name="Meidanis J."/>
            <person name="Menck C.F.M."/>
            <person name="Miyaki C.Y."/>
            <person name="Moon D.H."/>
            <person name="Moreira L.M."/>
            <person name="Novo M.T.M."/>
            <person name="Okura V.K."/>
            <person name="Oliveira M.C."/>
            <person name="Oliveira V.R."/>
            <person name="Pereira H.A."/>
            <person name="Rossi A."/>
            <person name="Sena J.A.D."/>
            <person name="Silva C."/>
            <person name="de Souza R.F."/>
            <person name="Spinola L.A.F."/>
            <person name="Takita M.A."/>
            <person name="Tamura R.E."/>
            <person name="Teixeira E.C."/>
            <person name="Tezza R.I.D."/>
            <person name="Trindade dos Santos M."/>
            <person name="Truffi D."/>
            <person name="Tsai S.M."/>
            <person name="White F.F."/>
            <person name="Setubal J.C."/>
            <person name="Kitajima J.P."/>
        </authorList>
    </citation>
    <scope>NUCLEOTIDE SEQUENCE [LARGE SCALE GENOMIC DNA]</scope>
    <source>
        <strain>ATCC 33913 / DSM 3586 / NCPPB 528 / LMG 568 / P 25</strain>
    </source>
</reference>
<protein>
    <recommendedName>
        <fullName evidence="1">SsrA-binding protein</fullName>
    </recommendedName>
    <alternativeName>
        <fullName evidence="1">Small protein B</fullName>
    </alternativeName>
</protein>
<name>SSRP_XANCP</name>
<evidence type="ECO:0000255" key="1">
    <source>
        <dbReference type="HAMAP-Rule" id="MF_00023"/>
    </source>
</evidence>
<evidence type="ECO:0000256" key="2">
    <source>
        <dbReference type="SAM" id="MobiDB-lite"/>
    </source>
</evidence>
<keyword id="KW-0963">Cytoplasm</keyword>
<keyword id="KW-1185">Reference proteome</keyword>
<keyword id="KW-0694">RNA-binding</keyword>
<organism>
    <name type="scientific">Xanthomonas campestris pv. campestris (strain ATCC 33913 / DSM 3586 / NCPPB 528 / LMG 568 / P 25)</name>
    <dbReference type="NCBI Taxonomy" id="190485"/>
    <lineage>
        <taxon>Bacteria</taxon>
        <taxon>Pseudomonadati</taxon>
        <taxon>Pseudomonadota</taxon>
        <taxon>Gammaproteobacteria</taxon>
        <taxon>Lysobacterales</taxon>
        <taxon>Lysobacteraceae</taxon>
        <taxon>Xanthomonas</taxon>
    </lineage>
</organism>